<proteinExistence type="inferred from homology"/>
<keyword id="KW-0067">ATP-binding</keyword>
<keyword id="KW-0997">Cell inner membrane</keyword>
<keyword id="KW-1003">Cell membrane</keyword>
<keyword id="KW-0201">Cytochrome c-type biogenesis</keyword>
<keyword id="KW-0472">Membrane</keyword>
<keyword id="KW-0547">Nucleotide-binding</keyword>
<keyword id="KW-1185">Reference proteome</keyword>
<keyword id="KW-1278">Translocase</keyword>
<keyword id="KW-0813">Transport</keyword>
<feature type="chain" id="PRO_0000092193" description="Cytochrome c biogenesis ATP-binding export protein CcmA">
    <location>
        <begin position="1"/>
        <end position="213"/>
    </location>
</feature>
<feature type="domain" description="ABC transporter" evidence="1">
    <location>
        <begin position="7"/>
        <end position="213"/>
    </location>
</feature>
<feature type="binding site" evidence="1">
    <location>
        <begin position="39"/>
        <end position="46"/>
    </location>
    <ligand>
        <name>ATP</name>
        <dbReference type="ChEBI" id="CHEBI:30616"/>
    </ligand>
</feature>
<dbReference type="EC" id="7.6.2.5" evidence="1"/>
<dbReference type="EMBL" id="AE004439">
    <property type="protein sequence ID" value="AAK02089.1"/>
    <property type="molecule type" value="Genomic_DNA"/>
</dbReference>
<dbReference type="RefSeq" id="WP_010906428.1">
    <property type="nucleotide sequence ID" value="NC_002663.1"/>
</dbReference>
<dbReference type="SMR" id="Q9CPN2"/>
<dbReference type="STRING" id="272843.PM0005"/>
<dbReference type="EnsemblBacteria" id="AAK02089">
    <property type="protein sequence ID" value="AAK02089"/>
    <property type="gene ID" value="PM0005"/>
</dbReference>
<dbReference type="KEGG" id="pmu:PM0005"/>
<dbReference type="PATRIC" id="fig|272843.6.peg.5"/>
<dbReference type="HOGENOM" id="CLU_000604_1_2_6"/>
<dbReference type="OrthoDB" id="9800654at2"/>
<dbReference type="Proteomes" id="UP000000809">
    <property type="component" value="Chromosome"/>
</dbReference>
<dbReference type="GO" id="GO:0005886">
    <property type="term" value="C:plasma membrane"/>
    <property type="evidence" value="ECO:0007669"/>
    <property type="project" value="UniProtKB-SubCell"/>
</dbReference>
<dbReference type="GO" id="GO:0015439">
    <property type="term" value="F:ABC-type heme transporter activity"/>
    <property type="evidence" value="ECO:0007669"/>
    <property type="project" value="UniProtKB-EC"/>
</dbReference>
<dbReference type="GO" id="GO:0005524">
    <property type="term" value="F:ATP binding"/>
    <property type="evidence" value="ECO:0007669"/>
    <property type="project" value="UniProtKB-KW"/>
</dbReference>
<dbReference type="GO" id="GO:0016887">
    <property type="term" value="F:ATP hydrolysis activity"/>
    <property type="evidence" value="ECO:0007669"/>
    <property type="project" value="InterPro"/>
</dbReference>
<dbReference type="GO" id="GO:0017004">
    <property type="term" value="P:cytochrome complex assembly"/>
    <property type="evidence" value="ECO:0007669"/>
    <property type="project" value="UniProtKB-KW"/>
</dbReference>
<dbReference type="Gene3D" id="3.40.50.300">
    <property type="entry name" value="P-loop containing nucleotide triphosphate hydrolases"/>
    <property type="match status" value="1"/>
</dbReference>
<dbReference type="InterPro" id="IPR003593">
    <property type="entry name" value="AAA+_ATPase"/>
</dbReference>
<dbReference type="InterPro" id="IPR003439">
    <property type="entry name" value="ABC_transporter-like_ATP-bd"/>
</dbReference>
<dbReference type="InterPro" id="IPR017871">
    <property type="entry name" value="ABC_transporter-like_CS"/>
</dbReference>
<dbReference type="InterPro" id="IPR005895">
    <property type="entry name" value="ABC_transptr_haem_export_CcmA"/>
</dbReference>
<dbReference type="InterPro" id="IPR027417">
    <property type="entry name" value="P-loop_NTPase"/>
</dbReference>
<dbReference type="NCBIfam" id="TIGR01189">
    <property type="entry name" value="ccmA"/>
    <property type="match status" value="1"/>
</dbReference>
<dbReference type="NCBIfam" id="NF010061">
    <property type="entry name" value="PRK13538.1"/>
    <property type="match status" value="1"/>
</dbReference>
<dbReference type="PANTHER" id="PTHR43499">
    <property type="entry name" value="ABC TRANSPORTER I FAMILY MEMBER 1"/>
    <property type="match status" value="1"/>
</dbReference>
<dbReference type="PANTHER" id="PTHR43499:SF1">
    <property type="entry name" value="ABC TRANSPORTER I FAMILY MEMBER 1"/>
    <property type="match status" value="1"/>
</dbReference>
<dbReference type="Pfam" id="PF00005">
    <property type="entry name" value="ABC_tran"/>
    <property type="match status" value="1"/>
</dbReference>
<dbReference type="SMART" id="SM00382">
    <property type="entry name" value="AAA"/>
    <property type="match status" value="1"/>
</dbReference>
<dbReference type="SUPFAM" id="SSF52540">
    <property type="entry name" value="P-loop containing nucleoside triphosphate hydrolases"/>
    <property type="match status" value="1"/>
</dbReference>
<dbReference type="PROSITE" id="PS00211">
    <property type="entry name" value="ABC_TRANSPORTER_1"/>
    <property type="match status" value="1"/>
</dbReference>
<dbReference type="PROSITE" id="PS50893">
    <property type="entry name" value="ABC_TRANSPORTER_2"/>
    <property type="match status" value="1"/>
</dbReference>
<dbReference type="PROSITE" id="PS51243">
    <property type="entry name" value="CCMA"/>
    <property type="match status" value="1"/>
</dbReference>
<reference key="1">
    <citation type="journal article" date="2001" name="Proc. Natl. Acad. Sci. U.S.A.">
        <title>Complete genomic sequence of Pasteurella multocida Pm70.</title>
        <authorList>
            <person name="May B.J."/>
            <person name="Zhang Q."/>
            <person name="Li L.L."/>
            <person name="Paustian M.L."/>
            <person name="Whittam T.S."/>
            <person name="Kapur V."/>
        </authorList>
    </citation>
    <scope>NUCLEOTIDE SEQUENCE [LARGE SCALE GENOMIC DNA]</scope>
    <source>
        <strain>Pm70</strain>
    </source>
</reference>
<sequence>MSMSYQLKTKKLACQRGDNVLFTDFNFVWNSGDFVQIEGHNGIGKTSLLRILIGLAQQREGEVFWNGIPIQTQRETFQYDLLYLGHHSGIKPELTAWENLKFYQQMSACELGEDKLWQVLETVGLLGREDIPAAQLSAGQQRRIALARLWLSKAPLWILDEPFTAIDKHGVQVLTTLFEQHATQGGIVIFTSHQDVQSRLLKKVRLENYKFTE</sequence>
<gene>
    <name evidence="1" type="primary">ccmA</name>
    <name type="ordered locus">PM0005</name>
</gene>
<protein>
    <recommendedName>
        <fullName evidence="1">Cytochrome c biogenesis ATP-binding export protein CcmA</fullName>
        <ecNumber evidence="1">7.6.2.5</ecNumber>
    </recommendedName>
    <alternativeName>
        <fullName evidence="1">Heme exporter protein A</fullName>
    </alternativeName>
</protein>
<name>CCMA_PASMU</name>
<comment type="function">
    <text evidence="1">Part of the ABC transporter complex CcmAB involved in the biogenesis of c-type cytochromes; once thought to export heme, this seems not to be the case, but its exact role is uncertain. Responsible for energy coupling to the transport system.</text>
</comment>
<comment type="catalytic activity">
    <reaction evidence="1">
        <text>heme b(in) + ATP + H2O = heme b(out) + ADP + phosphate + H(+)</text>
        <dbReference type="Rhea" id="RHEA:19261"/>
        <dbReference type="ChEBI" id="CHEBI:15377"/>
        <dbReference type="ChEBI" id="CHEBI:15378"/>
        <dbReference type="ChEBI" id="CHEBI:30616"/>
        <dbReference type="ChEBI" id="CHEBI:43474"/>
        <dbReference type="ChEBI" id="CHEBI:60344"/>
        <dbReference type="ChEBI" id="CHEBI:456216"/>
        <dbReference type="EC" id="7.6.2.5"/>
    </reaction>
</comment>
<comment type="subunit">
    <text evidence="1">The complex is composed of two ATP-binding proteins (CcmA) and two transmembrane proteins (CcmB).</text>
</comment>
<comment type="subcellular location">
    <subcellularLocation>
        <location evidence="1">Cell inner membrane</location>
        <topology evidence="1">Peripheral membrane protein</topology>
    </subcellularLocation>
</comment>
<comment type="similarity">
    <text evidence="1">Belongs to the ABC transporter superfamily. CcmA exporter (TC 3.A.1.107) family.</text>
</comment>
<organism>
    <name type="scientific">Pasteurella multocida (strain Pm70)</name>
    <dbReference type="NCBI Taxonomy" id="272843"/>
    <lineage>
        <taxon>Bacteria</taxon>
        <taxon>Pseudomonadati</taxon>
        <taxon>Pseudomonadota</taxon>
        <taxon>Gammaproteobacteria</taxon>
        <taxon>Pasteurellales</taxon>
        <taxon>Pasteurellaceae</taxon>
        <taxon>Pasteurella</taxon>
    </lineage>
</organism>
<accession>Q9CPN2</accession>
<evidence type="ECO:0000255" key="1">
    <source>
        <dbReference type="HAMAP-Rule" id="MF_01707"/>
    </source>
</evidence>